<proteinExistence type="inferred from homology"/>
<reference key="1">
    <citation type="journal article" date="2002" name="Proc. Natl. Acad. Sci. U.S.A.">
        <title>The genome sequence of the facultative intracellular pathogen Brucella melitensis.</title>
        <authorList>
            <person name="DelVecchio V.G."/>
            <person name="Kapatral V."/>
            <person name="Redkar R.J."/>
            <person name="Patra G."/>
            <person name="Mujer C."/>
            <person name="Los T."/>
            <person name="Ivanova N."/>
            <person name="Anderson I."/>
            <person name="Bhattacharyya A."/>
            <person name="Lykidis A."/>
            <person name="Reznik G."/>
            <person name="Jablonski L."/>
            <person name="Larsen N."/>
            <person name="D'Souza M."/>
            <person name="Bernal A."/>
            <person name="Mazur M."/>
            <person name="Goltsman E."/>
            <person name="Selkov E."/>
            <person name="Elzer P.H."/>
            <person name="Hagius S."/>
            <person name="O'Callaghan D."/>
            <person name="Letesson J.-J."/>
            <person name="Haselkorn R."/>
            <person name="Kyrpides N.C."/>
            <person name="Overbeek R."/>
        </authorList>
    </citation>
    <scope>NUCLEOTIDE SEQUENCE [LARGE SCALE GENOMIC DNA]</scope>
    <source>
        <strain>ATCC 23456 / CCUG 17765 / NCTC 10094 / 16M</strain>
    </source>
</reference>
<dbReference type="EMBL" id="AE008917">
    <property type="protein sequence ID" value="AAL51944.1"/>
    <property type="molecule type" value="Genomic_DNA"/>
</dbReference>
<dbReference type="PIR" id="AE3347">
    <property type="entry name" value="AE3347"/>
</dbReference>
<dbReference type="RefSeq" id="WP_004683924.1">
    <property type="nucleotide sequence ID" value="NZ_GG703780.1"/>
</dbReference>
<dbReference type="SMR" id="Q8YHN4"/>
<dbReference type="GeneID" id="29593574"/>
<dbReference type="KEGG" id="bme:BMEI0763"/>
<dbReference type="KEGG" id="bmel:DK63_659"/>
<dbReference type="PATRIC" id="fig|224914.52.peg.690"/>
<dbReference type="eggNOG" id="COG0092">
    <property type="taxonomic scope" value="Bacteria"/>
</dbReference>
<dbReference type="PhylomeDB" id="Q8YHN4"/>
<dbReference type="Proteomes" id="UP000000419">
    <property type="component" value="Chromosome I"/>
</dbReference>
<dbReference type="GO" id="GO:0022627">
    <property type="term" value="C:cytosolic small ribosomal subunit"/>
    <property type="evidence" value="ECO:0007669"/>
    <property type="project" value="TreeGrafter"/>
</dbReference>
<dbReference type="GO" id="GO:0003729">
    <property type="term" value="F:mRNA binding"/>
    <property type="evidence" value="ECO:0007669"/>
    <property type="project" value="UniProtKB-UniRule"/>
</dbReference>
<dbReference type="GO" id="GO:0019843">
    <property type="term" value="F:rRNA binding"/>
    <property type="evidence" value="ECO:0007669"/>
    <property type="project" value="UniProtKB-UniRule"/>
</dbReference>
<dbReference type="GO" id="GO:0003735">
    <property type="term" value="F:structural constituent of ribosome"/>
    <property type="evidence" value="ECO:0007669"/>
    <property type="project" value="InterPro"/>
</dbReference>
<dbReference type="GO" id="GO:0006412">
    <property type="term" value="P:translation"/>
    <property type="evidence" value="ECO:0007669"/>
    <property type="project" value="UniProtKB-UniRule"/>
</dbReference>
<dbReference type="CDD" id="cd02412">
    <property type="entry name" value="KH-II_30S_S3"/>
    <property type="match status" value="1"/>
</dbReference>
<dbReference type="FunFam" id="3.30.1140.32:FF:000009">
    <property type="entry name" value="30S ribosomal protein S3"/>
    <property type="match status" value="1"/>
</dbReference>
<dbReference type="FunFam" id="3.30.300.20:FF:000001">
    <property type="entry name" value="30S ribosomal protein S3"/>
    <property type="match status" value="1"/>
</dbReference>
<dbReference type="Gene3D" id="3.30.300.20">
    <property type="match status" value="1"/>
</dbReference>
<dbReference type="Gene3D" id="3.30.1140.32">
    <property type="entry name" value="Ribosomal protein S3, C-terminal domain"/>
    <property type="match status" value="1"/>
</dbReference>
<dbReference type="HAMAP" id="MF_01309_B">
    <property type="entry name" value="Ribosomal_uS3_B"/>
    <property type="match status" value="1"/>
</dbReference>
<dbReference type="InterPro" id="IPR004087">
    <property type="entry name" value="KH_dom"/>
</dbReference>
<dbReference type="InterPro" id="IPR015946">
    <property type="entry name" value="KH_dom-like_a/b"/>
</dbReference>
<dbReference type="InterPro" id="IPR004044">
    <property type="entry name" value="KH_dom_type_2"/>
</dbReference>
<dbReference type="InterPro" id="IPR009019">
    <property type="entry name" value="KH_sf_prok-type"/>
</dbReference>
<dbReference type="InterPro" id="IPR036419">
    <property type="entry name" value="Ribosomal_S3_C_sf"/>
</dbReference>
<dbReference type="InterPro" id="IPR005704">
    <property type="entry name" value="Ribosomal_uS3_bac-typ"/>
</dbReference>
<dbReference type="InterPro" id="IPR001351">
    <property type="entry name" value="Ribosomal_uS3_C"/>
</dbReference>
<dbReference type="InterPro" id="IPR018280">
    <property type="entry name" value="Ribosomal_uS3_CS"/>
</dbReference>
<dbReference type="NCBIfam" id="TIGR01009">
    <property type="entry name" value="rpsC_bact"/>
    <property type="match status" value="1"/>
</dbReference>
<dbReference type="PANTHER" id="PTHR11760">
    <property type="entry name" value="30S/40S RIBOSOMAL PROTEIN S3"/>
    <property type="match status" value="1"/>
</dbReference>
<dbReference type="PANTHER" id="PTHR11760:SF19">
    <property type="entry name" value="SMALL RIBOSOMAL SUBUNIT PROTEIN US3C"/>
    <property type="match status" value="1"/>
</dbReference>
<dbReference type="Pfam" id="PF07650">
    <property type="entry name" value="KH_2"/>
    <property type="match status" value="1"/>
</dbReference>
<dbReference type="Pfam" id="PF00189">
    <property type="entry name" value="Ribosomal_S3_C"/>
    <property type="match status" value="1"/>
</dbReference>
<dbReference type="SMART" id="SM00322">
    <property type="entry name" value="KH"/>
    <property type="match status" value="1"/>
</dbReference>
<dbReference type="SUPFAM" id="SSF54814">
    <property type="entry name" value="Prokaryotic type KH domain (KH-domain type II)"/>
    <property type="match status" value="1"/>
</dbReference>
<dbReference type="SUPFAM" id="SSF54821">
    <property type="entry name" value="Ribosomal protein S3 C-terminal domain"/>
    <property type="match status" value="1"/>
</dbReference>
<dbReference type="PROSITE" id="PS50823">
    <property type="entry name" value="KH_TYPE_2"/>
    <property type="match status" value="1"/>
</dbReference>
<dbReference type="PROSITE" id="PS00548">
    <property type="entry name" value="RIBOSOMAL_S3"/>
    <property type="match status" value="1"/>
</dbReference>
<organism>
    <name type="scientific">Brucella melitensis biotype 1 (strain ATCC 23456 / CCUG 17765 / NCTC 10094 / 16M)</name>
    <dbReference type="NCBI Taxonomy" id="224914"/>
    <lineage>
        <taxon>Bacteria</taxon>
        <taxon>Pseudomonadati</taxon>
        <taxon>Pseudomonadota</taxon>
        <taxon>Alphaproteobacteria</taxon>
        <taxon>Hyphomicrobiales</taxon>
        <taxon>Brucellaceae</taxon>
        <taxon>Brucella/Ochrobactrum group</taxon>
        <taxon>Brucella</taxon>
    </lineage>
</organism>
<feature type="chain" id="PRO_0000130085" description="Small ribosomal subunit protein uS3">
    <location>
        <begin position="1"/>
        <end position="236"/>
    </location>
</feature>
<feature type="domain" description="KH type-2" evidence="1">
    <location>
        <begin position="39"/>
        <end position="107"/>
    </location>
</feature>
<feature type="region of interest" description="Disordered" evidence="2">
    <location>
        <begin position="214"/>
        <end position="236"/>
    </location>
</feature>
<evidence type="ECO:0000255" key="1">
    <source>
        <dbReference type="HAMAP-Rule" id="MF_01309"/>
    </source>
</evidence>
<evidence type="ECO:0000256" key="2">
    <source>
        <dbReference type="SAM" id="MobiDB-lite"/>
    </source>
</evidence>
<evidence type="ECO:0000305" key="3"/>
<comment type="function">
    <text evidence="1">Binds the lower part of the 30S subunit head. Binds mRNA in the 70S ribosome, positioning it for translation.</text>
</comment>
<comment type="subunit">
    <text evidence="1">Part of the 30S ribosomal subunit. Forms a tight complex with proteins S10 and S14.</text>
</comment>
<comment type="similarity">
    <text evidence="1">Belongs to the universal ribosomal protein uS3 family.</text>
</comment>
<protein>
    <recommendedName>
        <fullName evidence="1">Small ribosomal subunit protein uS3</fullName>
    </recommendedName>
    <alternativeName>
        <fullName evidence="3">30S ribosomal protein S3</fullName>
    </alternativeName>
</protein>
<gene>
    <name evidence="1" type="primary">rpsC</name>
    <name type="ordered locus">BMEI0763</name>
</gene>
<keyword id="KW-0687">Ribonucleoprotein</keyword>
<keyword id="KW-0689">Ribosomal protein</keyword>
<keyword id="KW-0694">RNA-binding</keyword>
<keyword id="KW-0699">rRNA-binding</keyword>
<accession>Q8YHN4</accession>
<sequence length="236" mass="26590">MGQKINPIGLRLGVNRTWDSRWYANTGEYGKLLHEDVKIREFLTEELKQAAISKIVIERPHKKCRVTIHSARPGIIIGKKGADIEKLRKKLSEMTNADTSLNIVEVRKPEVDATLIAQSIAQQLERRVAFRRAMKRAVQSAMRLGAEGIRINCSGRLGGAEIARMEWYREGRVPLHTLRADIDYGTAEAKTAYGICGVKVWVFKGEILEHDPMASERRAVEGDNQGSSSNRRRENA</sequence>
<name>RS3_BRUME</name>